<reference key="1">
    <citation type="submission" date="2007-10" db="EMBL/GenBank/DDBJ databases">
        <title>Complete sequence of Salinispora arenicola CNS-205.</title>
        <authorList>
            <consortium name="US DOE Joint Genome Institute"/>
            <person name="Copeland A."/>
            <person name="Lucas S."/>
            <person name="Lapidus A."/>
            <person name="Barry K."/>
            <person name="Glavina del Rio T."/>
            <person name="Dalin E."/>
            <person name="Tice H."/>
            <person name="Pitluck S."/>
            <person name="Foster B."/>
            <person name="Schmutz J."/>
            <person name="Larimer F."/>
            <person name="Land M."/>
            <person name="Hauser L."/>
            <person name="Kyrpides N."/>
            <person name="Ivanova N."/>
            <person name="Jensen P.R."/>
            <person name="Moore B.S."/>
            <person name="Penn K."/>
            <person name="Jenkins C."/>
            <person name="Udwary D."/>
            <person name="Xiang L."/>
            <person name="Gontang E."/>
            <person name="Richardson P."/>
        </authorList>
    </citation>
    <scope>NUCLEOTIDE SEQUENCE [LARGE SCALE GENOMIC DNA]</scope>
    <source>
        <strain>CNS-205</strain>
    </source>
</reference>
<accession>A8M2J3</accession>
<name>ATPB_SALAI</name>
<evidence type="ECO:0000255" key="1">
    <source>
        <dbReference type="HAMAP-Rule" id="MF_01347"/>
    </source>
</evidence>
<proteinExistence type="inferred from homology"/>
<dbReference type="EC" id="7.1.2.2" evidence="1"/>
<dbReference type="EMBL" id="CP000850">
    <property type="protein sequence ID" value="ABV99802.1"/>
    <property type="molecule type" value="Genomic_DNA"/>
</dbReference>
<dbReference type="SMR" id="A8M2J3"/>
<dbReference type="STRING" id="391037.Sare_4012"/>
<dbReference type="KEGG" id="saq:Sare_4012"/>
<dbReference type="PATRIC" id="fig|391037.6.peg.4049"/>
<dbReference type="eggNOG" id="COG0055">
    <property type="taxonomic scope" value="Bacteria"/>
</dbReference>
<dbReference type="HOGENOM" id="CLU_022398_0_2_11"/>
<dbReference type="OrthoDB" id="9801639at2"/>
<dbReference type="GO" id="GO:0005886">
    <property type="term" value="C:plasma membrane"/>
    <property type="evidence" value="ECO:0007669"/>
    <property type="project" value="UniProtKB-SubCell"/>
</dbReference>
<dbReference type="GO" id="GO:0045259">
    <property type="term" value="C:proton-transporting ATP synthase complex"/>
    <property type="evidence" value="ECO:0007669"/>
    <property type="project" value="UniProtKB-KW"/>
</dbReference>
<dbReference type="GO" id="GO:0005524">
    <property type="term" value="F:ATP binding"/>
    <property type="evidence" value="ECO:0007669"/>
    <property type="project" value="UniProtKB-UniRule"/>
</dbReference>
<dbReference type="GO" id="GO:0016887">
    <property type="term" value="F:ATP hydrolysis activity"/>
    <property type="evidence" value="ECO:0007669"/>
    <property type="project" value="InterPro"/>
</dbReference>
<dbReference type="GO" id="GO:0046933">
    <property type="term" value="F:proton-transporting ATP synthase activity, rotational mechanism"/>
    <property type="evidence" value="ECO:0007669"/>
    <property type="project" value="UniProtKB-UniRule"/>
</dbReference>
<dbReference type="CDD" id="cd18110">
    <property type="entry name" value="ATP-synt_F1_beta_C"/>
    <property type="match status" value="1"/>
</dbReference>
<dbReference type="CDD" id="cd18115">
    <property type="entry name" value="ATP-synt_F1_beta_N"/>
    <property type="match status" value="1"/>
</dbReference>
<dbReference type="CDD" id="cd01133">
    <property type="entry name" value="F1-ATPase_beta_CD"/>
    <property type="match status" value="1"/>
</dbReference>
<dbReference type="FunFam" id="1.10.1140.10:FF:000001">
    <property type="entry name" value="ATP synthase subunit beta"/>
    <property type="match status" value="1"/>
</dbReference>
<dbReference type="FunFam" id="2.40.10.170:FF:000005">
    <property type="entry name" value="ATP synthase subunit beta"/>
    <property type="match status" value="1"/>
</dbReference>
<dbReference type="FunFam" id="3.40.50.300:FF:000004">
    <property type="entry name" value="ATP synthase subunit beta"/>
    <property type="match status" value="1"/>
</dbReference>
<dbReference type="Gene3D" id="2.40.10.170">
    <property type="match status" value="1"/>
</dbReference>
<dbReference type="Gene3D" id="1.10.1140.10">
    <property type="entry name" value="Bovine Mitochondrial F1-atpase, Atp Synthase Beta Chain, Chain D, domain 3"/>
    <property type="match status" value="1"/>
</dbReference>
<dbReference type="Gene3D" id="3.40.50.300">
    <property type="entry name" value="P-loop containing nucleotide triphosphate hydrolases"/>
    <property type="match status" value="1"/>
</dbReference>
<dbReference type="HAMAP" id="MF_01347">
    <property type="entry name" value="ATP_synth_beta_bact"/>
    <property type="match status" value="1"/>
</dbReference>
<dbReference type="InterPro" id="IPR003593">
    <property type="entry name" value="AAA+_ATPase"/>
</dbReference>
<dbReference type="InterPro" id="IPR055190">
    <property type="entry name" value="ATP-synt_VA_C"/>
</dbReference>
<dbReference type="InterPro" id="IPR005722">
    <property type="entry name" value="ATP_synth_F1_bsu"/>
</dbReference>
<dbReference type="InterPro" id="IPR020003">
    <property type="entry name" value="ATPase_a/bsu_AS"/>
</dbReference>
<dbReference type="InterPro" id="IPR050053">
    <property type="entry name" value="ATPase_alpha/beta_chains"/>
</dbReference>
<dbReference type="InterPro" id="IPR004100">
    <property type="entry name" value="ATPase_F1/V1/A1_a/bsu_N"/>
</dbReference>
<dbReference type="InterPro" id="IPR036121">
    <property type="entry name" value="ATPase_F1/V1/A1_a/bsu_N_sf"/>
</dbReference>
<dbReference type="InterPro" id="IPR000194">
    <property type="entry name" value="ATPase_F1/V1/A1_a/bsu_nucl-bd"/>
</dbReference>
<dbReference type="InterPro" id="IPR024034">
    <property type="entry name" value="ATPase_F1/V1_b/a_C"/>
</dbReference>
<dbReference type="InterPro" id="IPR027417">
    <property type="entry name" value="P-loop_NTPase"/>
</dbReference>
<dbReference type="NCBIfam" id="TIGR01039">
    <property type="entry name" value="atpD"/>
    <property type="match status" value="1"/>
</dbReference>
<dbReference type="PANTHER" id="PTHR15184">
    <property type="entry name" value="ATP SYNTHASE"/>
    <property type="match status" value="1"/>
</dbReference>
<dbReference type="PANTHER" id="PTHR15184:SF71">
    <property type="entry name" value="ATP SYNTHASE SUBUNIT BETA, MITOCHONDRIAL"/>
    <property type="match status" value="1"/>
</dbReference>
<dbReference type="Pfam" id="PF00006">
    <property type="entry name" value="ATP-synt_ab"/>
    <property type="match status" value="1"/>
</dbReference>
<dbReference type="Pfam" id="PF02874">
    <property type="entry name" value="ATP-synt_ab_N"/>
    <property type="match status" value="1"/>
</dbReference>
<dbReference type="Pfam" id="PF22919">
    <property type="entry name" value="ATP-synt_VA_C"/>
    <property type="match status" value="1"/>
</dbReference>
<dbReference type="SMART" id="SM00382">
    <property type="entry name" value="AAA"/>
    <property type="match status" value="1"/>
</dbReference>
<dbReference type="SUPFAM" id="SSF47917">
    <property type="entry name" value="C-terminal domain of alpha and beta subunits of F1 ATP synthase"/>
    <property type="match status" value="1"/>
</dbReference>
<dbReference type="SUPFAM" id="SSF50615">
    <property type="entry name" value="N-terminal domain of alpha and beta subunits of F1 ATP synthase"/>
    <property type="match status" value="1"/>
</dbReference>
<dbReference type="SUPFAM" id="SSF52540">
    <property type="entry name" value="P-loop containing nucleoside triphosphate hydrolases"/>
    <property type="match status" value="1"/>
</dbReference>
<dbReference type="PROSITE" id="PS00152">
    <property type="entry name" value="ATPASE_ALPHA_BETA"/>
    <property type="match status" value="1"/>
</dbReference>
<protein>
    <recommendedName>
        <fullName evidence="1">ATP synthase subunit beta</fullName>
        <ecNumber evidence="1">7.1.2.2</ecNumber>
    </recommendedName>
    <alternativeName>
        <fullName evidence="1">ATP synthase F1 sector subunit beta</fullName>
    </alternativeName>
    <alternativeName>
        <fullName evidence="1">F-ATPase subunit beta</fullName>
    </alternativeName>
</protein>
<sequence length="485" mass="52629">MTVSATADGPAGTKTATGRVVRVIGPVVDAEFPRDAMPDLFNALHVDVTLAGGEKTLTLEVAQHLGDNLVRAISMQPTDGLVRGVEVRDTGSPITVPVGDTVKGHVFNAIGECLNLEPGETLSPDDHWQIHRKAPAFADLEPKTEMLETGIKVIDLLAPYVKGGKIGLFGGAGVGKTVLIQEMITRVARNFGGTSVFAGVGERTREGNDLIAEMTESGVIDKTALVYGQMDEPPGTRLRVALSALTMAEYFRDVQKQEVLLFIDNIFRFTQAGSEVSTLLGRMPSAVGYQPTLADEMGELQERITSVRGQAITSLQAIYVPADDYTDPAPATTFAHLDATTNLERSISDKGIYPAVDPLASSSRILAPEFVGQEHFVVASEVKRILQRYKDLQDIIAILGIEELSEEDKLIVGRARRIERFLSQNTYAAEQFTGMKGSTVPIKETIEAFKKISEGEYDHFPEQAFFMCGGLDDLERKAKELMAEG</sequence>
<gene>
    <name evidence="1" type="primary">atpD</name>
    <name type="ordered locus">Sare_4012</name>
</gene>
<organism>
    <name type="scientific">Salinispora arenicola (strain CNS-205)</name>
    <dbReference type="NCBI Taxonomy" id="391037"/>
    <lineage>
        <taxon>Bacteria</taxon>
        <taxon>Bacillati</taxon>
        <taxon>Actinomycetota</taxon>
        <taxon>Actinomycetes</taxon>
        <taxon>Micromonosporales</taxon>
        <taxon>Micromonosporaceae</taxon>
        <taxon>Salinispora</taxon>
    </lineage>
</organism>
<keyword id="KW-0066">ATP synthesis</keyword>
<keyword id="KW-0067">ATP-binding</keyword>
<keyword id="KW-1003">Cell membrane</keyword>
<keyword id="KW-0139">CF(1)</keyword>
<keyword id="KW-0375">Hydrogen ion transport</keyword>
<keyword id="KW-0406">Ion transport</keyword>
<keyword id="KW-0472">Membrane</keyword>
<keyword id="KW-0547">Nucleotide-binding</keyword>
<keyword id="KW-1278">Translocase</keyword>
<keyword id="KW-0813">Transport</keyword>
<feature type="chain" id="PRO_0000339585" description="ATP synthase subunit beta">
    <location>
        <begin position="1"/>
        <end position="485"/>
    </location>
</feature>
<feature type="binding site" evidence="1">
    <location>
        <begin position="170"/>
        <end position="177"/>
    </location>
    <ligand>
        <name>ATP</name>
        <dbReference type="ChEBI" id="CHEBI:30616"/>
    </ligand>
</feature>
<comment type="function">
    <text evidence="1">Produces ATP from ADP in the presence of a proton gradient across the membrane. The catalytic sites are hosted primarily by the beta subunits.</text>
</comment>
<comment type="catalytic activity">
    <reaction evidence="1">
        <text>ATP + H2O + 4 H(+)(in) = ADP + phosphate + 5 H(+)(out)</text>
        <dbReference type="Rhea" id="RHEA:57720"/>
        <dbReference type="ChEBI" id="CHEBI:15377"/>
        <dbReference type="ChEBI" id="CHEBI:15378"/>
        <dbReference type="ChEBI" id="CHEBI:30616"/>
        <dbReference type="ChEBI" id="CHEBI:43474"/>
        <dbReference type="ChEBI" id="CHEBI:456216"/>
        <dbReference type="EC" id="7.1.2.2"/>
    </reaction>
</comment>
<comment type="subunit">
    <text evidence="1">F-type ATPases have 2 components, CF(1) - the catalytic core - and CF(0) - the membrane proton channel. CF(1) has five subunits: alpha(3), beta(3), gamma(1), delta(1), epsilon(1). CF(0) has three main subunits: a(1), b(2) and c(9-12). The alpha and beta chains form an alternating ring which encloses part of the gamma chain. CF(1) is attached to CF(0) by a central stalk formed by the gamma and epsilon chains, while a peripheral stalk is formed by the delta and b chains.</text>
</comment>
<comment type="subcellular location">
    <subcellularLocation>
        <location evidence="1">Cell membrane</location>
        <topology evidence="1">Peripheral membrane protein</topology>
    </subcellularLocation>
</comment>
<comment type="similarity">
    <text evidence="1">Belongs to the ATPase alpha/beta chains family.</text>
</comment>